<gene>
    <name type="primary">glgB</name>
    <name type="ordered locus">Rv1326c</name>
    <name type="ORF">MTCY130.11c</name>
</gene>
<name>GLGB_MYCTU</name>
<evidence type="ECO:0000269" key="1">
    <source>
    </source>
</evidence>
<evidence type="ECO:0000269" key="2">
    <source>
    </source>
</evidence>
<evidence type="ECO:0000269" key="3">
    <source>
    </source>
</evidence>
<evidence type="ECO:0000269" key="4">
    <source>
    </source>
</evidence>
<evidence type="ECO:0000305" key="5"/>
<evidence type="ECO:0000305" key="6">
    <source>
    </source>
</evidence>
<evidence type="ECO:0000305" key="7">
    <source>
    </source>
</evidence>
<evidence type="ECO:0007829" key="8">
    <source>
        <dbReference type="PDB" id="3K1D"/>
    </source>
</evidence>
<organism>
    <name type="scientific">Mycobacterium tuberculosis (strain ATCC 25618 / H37Rv)</name>
    <dbReference type="NCBI Taxonomy" id="83332"/>
    <lineage>
        <taxon>Bacteria</taxon>
        <taxon>Bacillati</taxon>
        <taxon>Actinomycetota</taxon>
        <taxon>Actinomycetes</taxon>
        <taxon>Mycobacteriales</taxon>
        <taxon>Mycobacteriaceae</taxon>
        <taxon>Mycobacterium</taxon>
        <taxon>Mycobacterium tuberculosis complex</taxon>
    </lineage>
</organism>
<proteinExistence type="evidence at protein level"/>
<reference key="1">
    <citation type="journal article" date="1998" name="Nature">
        <title>Deciphering the biology of Mycobacterium tuberculosis from the complete genome sequence.</title>
        <authorList>
            <person name="Cole S.T."/>
            <person name="Brosch R."/>
            <person name="Parkhill J."/>
            <person name="Garnier T."/>
            <person name="Churcher C.M."/>
            <person name="Harris D.E."/>
            <person name="Gordon S.V."/>
            <person name="Eiglmeier K."/>
            <person name="Gas S."/>
            <person name="Barry C.E. III"/>
            <person name="Tekaia F."/>
            <person name="Badcock K."/>
            <person name="Basham D."/>
            <person name="Brown D."/>
            <person name="Chillingworth T."/>
            <person name="Connor R."/>
            <person name="Davies R.M."/>
            <person name="Devlin K."/>
            <person name="Feltwell T."/>
            <person name="Gentles S."/>
            <person name="Hamlin N."/>
            <person name="Holroyd S."/>
            <person name="Hornsby T."/>
            <person name="Jagels K."/>
            <person name="Krogh A."/>
            <person name="McLean J."/>
            <person name="Moule S."/>
            <person name="Murphy L.D."/>
            <person name="Oliver S."/>
            <person name="Osborne J."/>
            <person name="Quail M.A."/>
            <person name="Rajandream M.A."/>
            <person name="Rogers J."/>
            <person name="Rutter S."/>
            <person name="Seeger K."/>
            <person name="Skelton S."/>
            <person name="Squares S."/>
            <person name="Squares R."/>
            <person name="Sulston J.E."/>
            <person name="Taylor K."/>
            <person name="Whitehead S."/>
            <person name="Barrell B.G."/>
        </authorList>
    </citation>
    <scope>NUCLEOTIDE SEQUENCE [LARGE SCALE GENOMIC DNA]</scope>
    <source>
        <strain>ATCC 25618 / H37Rv</strain>
    </source>
</reference>
<reference key="2">
    <citation type="journal article" date="2007" name="Protein Expr. Purif.">
        <title>Expression and characterization of alpha-(1,4)-glucan branching enzyme Rv1326c of Mycobacterium tuberculosis H37Rv.</title>
        <authorList>
            <person name="Garg S.K."/>
            <person name="Alam M.S."/>
            <person name="Kishan K.V."/>
            <person name="Agrawal P."/>
        </authorList>
    </citation>
    <scope>FUNCTION</scope>
    <scope>CATALYTIC ACTIVITY</scope>
    <scope>SUBUNIT</scope>
    <scope>BIOPHYSICOCHEMICAL PROPERTIES</scope>
    <scope>ACTIVITY REGULATION</scope>
    <scope>DISULFIDE BONDS</scope>
    <source>
        <strain>ATCC 25618 / H37Rv</strain>
    </source>
</reference>
<reference key="3">
    <citation type="journal article" date="2008" name="Mol. Microbiol.">
        <title>Capsular glucan and intracellular glycogen of Mycobacterium tuberculosis: biosynthesis and impact on the persistence in mice.</title>
        <authorList>
            <person name="Sambou T."/>
            <person name="Dinadayala P."/>
            <person name="Stadthagen G."/>
            <person name="Barilone N."/>
            <person name="Bordat Y."/>
            <person name="Constant P."/>
            <person name="Levillain F."/>
            <person name="Neyrolles O."/>
            <person name="Gicquel B."/>
            <person name="Lemassu A."/>
            <person name="Daffe M."/>
            <person name="Jackson M."/>
        </authorList>
    </citation>
    <scope>FUNCTION IN CAPSULAR GLUCAN AND GLYCOGEN BIOSYNTHESIS</scope>
    <scope>DISRUPTION PHENOTYPE</scope>
    <scope>ESSENTIALITY</scope>
    <scope>PATHWAY</scope>
    <source>
        <strain>ATCC 25618 / H37Rv</strain>
    </source>
</reference>
<reference key="4">
    <citation type="journal article" date="2009" name="BMC Biochem.">
        <title>Redox biology of Mycobacterium tuberculosis H37Rv: protein-protein interaction between GlgB and WhiB1 involves exchange of thiol-disulfide.</title>
        <authorList>
            <person name="Garg S."/>
            <person name="Alam M.S."/>
            <person name="Bajpai R."/>
            <person name="Kishan K.R."/>
            <person name="Agrawal P."/>
        </authorList>
    </citation>
    <scope>INTERACTION WITH WHIB1</scope>
    <scope>DISULFIDE BOND</scope>
    <source>
        <strain>ATCC 25618 / H37Rv</strain>
    </source>
</reference>
<reference key="5">
    <citation type="journal article" date="2011" name="Mol. Cell. Proteomics">
        <title>Proteogenomic analysis of Mycobacterium tuberculosis by high resolution mass spectrometry.</title>
        <authorList>
            <person name="Kelkar D.S."/>
            <person name="Kumar D."/>
            <person name="Kumar P."/>
            <person name="Balakrishnan L."/>
            <person name="Muthusamy B."/>
            <person name="Yadav A.K."/>
            <person name="Shrivastava P."/>
            <person name="Marimuthu A."/>
            <person name="Anand S."/>
            <person name="Sundaram H."/>
            <person name="Kingsbury R."/>
            <person name="Harsha H.C."/>
            <person name="Nair B."/>
            <person name="Prasad T.S."/>
            <person name="Chauhan D.S."/>
            <person name="Katoch K."/>
            <person name="Katoch V.M."/>
            <person name="Kumar P."/>
            <person name="Chaerkady R."/>
            <person name="Ramachandran S."/>
            <person name="Dash D."/>
            <person name="Pandey A."/>
        </authorList>
    </citation>
    <scope>IDENTIFICATION BY MASS SPECTROMETRY [LARGE SCALE ANALYSIS]</scope>
    <source>
        <strain>ATCC 25618 / H37Rv</strain>
    </source>
</reference>
<reference key="6">
    <citation type="journal article" date="2010" name="J. Biol. Chem.">
        <title>Crystal structure of full-length Mycobacterium tuberculosis H37Rv glycogen branching enzyme: insights of N-terminal beta-sandwich in substrate specificity and enzymatic activity.</title>
        <authorList>
            <person name="Pal K."/>
            <person name="Kumar S."/>
            <person name="Sharma S."/>
            <person name="Garg S.K."/>
            <person name="Alam M.S."/>
            <person name="Xu H.E."/>
            <person name="Agrawal P."/>
            <person name="Swaminathan K."/>
        </authorList>
    </citation>
    <scope>X-RAY CRYSTALLOGRAPHY (2.33 ANGSTROMS) OF 10-371</scope>
    <scope>CATALYTIC ACTIVITY</scope>
    <scope>ACTIVITY REGULATION</scope>
    <scope>CATALYTIC MECHANISM</scope>
    <source>
        <strain>ATCC 25618 / H37Rv</strain>
    </source>
</reference>
<dbReference type="EC" id="2.4.1.18"/>
<dbReference type="EMBL" id="AL123456">
    <property type="protein sequence ID" value="CCP44084.1"/>
    <property type="molecule type" value="Genomic_DNA"/>
</dbReference>
<dbReference type="PIR" id="B70770">
    <property type="entry name" value="B70770"/>
</dbReference>
<dbReference type="RefSeq" id="NP_215842.1">
    <property type="nucleotide sequence ID" value="NC_000962.3"/>
</dbReference>
<dbReference type="RefSeq" id="WP_003900318.1">
    <property type="nucleotide sequence ID" value="NZ_NVQJ01000031.1"/>
</dbReference>
<dbReference type="PDB" id="3K1D">
    <property type="method" value="X-ray"/>
    <property type="resolution" value="2.33 A"/>
    <property type="chains" value="A=10-731"/>
</dbReference>
<dbReference type="PDBsum" id="3K1D"/>
<dbReference type="SMR" id="P9WN45"/>
<dbReference type="FunCoup" id="P9WN45">
    <property type="interactions" value="428"/>
</dbReference>
<dbReference type="STRING" id="83332.Rv1326c"/>
<dbReference type="PaxDb" id="83332-Rv1326c"/>
<dbReference type="DNASU" id="886893"/>
<dbReference type="GeneID" id="886893"/>
<dbReference type="KEGG" id="mtu:Rv1326c"/>
<dbReference type="KEGG" id="mtv:RVBD_1326c"/>
<dbReference type="TubercuList" id="Rv1326c"/>
<dbReference type="eggNOG" id="COG0296">
    <property type="taxonomic scope" value="Bacteria"/>
</dbReference>
<dbReference type="InParanoid" id="P9WN45"/>
<dbReference type="OrthoDB" id="9800174at2"/>
<dbReference type="PhylomeDB" id="P9WN45"/>
<dbReference type="BioCyc" id="MetaCyc:G185E-5505-MONOMER"/>
<dbReference type="BRENDA" id="2.4.1.18">
    <property type="organism ID" value="3445"/>
</dbReference>
<dbReference type="UniPathway" id="UPA00164"/>
<dbReference type="UniPathway" id="UPA00934"/>
<dbReference type="EvolutionaryTrace" id="P9WN45"/>
<dbReference type="Proteomes" id="UP000001584">
    <property type="component" value="Chromosome"/>
</dbReference>
<dbReference type="GO" id="GO:0005737">
    <property type="term" value="C:cytoplasm"/>
    <property type="evidence" value="ECO:0000318"/>
    <property type="project" value="GO_Central"/>
</dbReference>
<dbReference type="GO" id="GO:0005829">
    <property type="term" value="C:cytosol"/>
    <property type="evidence" value="ECO:0000318"/>
    <property type="project" value="GO_Central"/>
</dbReference>
<dbReference type="GO" id="GO:0005886">
    <property type="term" value="C:plasma membrane"/>
    <property type="evidence" value="ECO:0007005"/>
    <property type="project" value="MTBBASE"/>
</dbReference>
<dbReference type="GO" id="GO:0003844">
    <property type="term" value="F:1,4-alpha-glucan branching enzyme activity"/>
    <property type="evidence" value="ECO:0000314"/>
    <property type="project" value="MTBBASE"/>
</dbReference>
<dbReference type="GO" id="GO:0043169">
    <property type="term" value="F:cation binding"/>
    <property type="evidence" value="ECO:0007669"/>
    <property type="project" value="InterPro"/>
</dbReference>
<dbReference type="GO" id="GO:0004553">
    <property type="term" value="F:hydrolase activity, hydrolyzing O-glycosyl compounds"/>
    <property type="evidence" value="ECO:0007669"/>
    <property type="project" value="InterPro"/>
</dbReference>
<dbReference type="GO" id="GO:0045227">
    <property type="term" value="P:capsule polysaccharide biosynthetic process"/>
    <property type="evidence" value="ECO:0007669"/>
    <property type="project" value="UniProtKB-UniPathway"/>
</dbReference>
<dbReference type="GO" id="GO:0009250">
    <property type="term" value="P:glucan biosynthetic process"/>
    <property type="evidence" value="ECO:0000315"/>
    <property type="project" value="MTBBASE"/>
</dbReference>
<dbReference type="GO" id="GO:0005978">
    <property type="term" value="P:glycogen biosynthetic process"/>
    <property type="evidence" value="ECO:0000315"/>
    <property type="project" value="MTBBASE"/>
</dbReference>
<dbReference type="CDD" id="cd11322">
    <property type="entry name" value="AmyAc_Glg_BE"/>
    <property type="match status" value="1"/>
</dbReference>
<dbReference type="CDD" id="cd02855">
    <property type="entry name" value="E_set_GBE_prok_N"/>
    <property type="match status" value="1"/>
</dbReference>
<dbReference type="FunFam" id="2.60.40.10:FF:000169">
    <property type="entry name" value="1,4-alpha-glucan branching enzyme GlgB"/>
    <property type="match status" value="1"/>
</dbReference>
<dbReference type="FunFam" id="2.60.40.10:FF:002204">
    <property type="entry name" value="1,4-alpha-glucan branching enzyme GlgB"/>
    <property type="match status" value="1"/>
</dbReference>
<dbReference type="FunFam" id="2.60.40.1180:FF:000002">
    <property type="entry name" value="1,4-alpha-glucan branching enzyme GlgB"/>
    <property type="match status" value="1"/>
</dbReference>
<dbReference type="FunFam" id="3.20.20.80:FF:000003">
    <property type="entry name" value="1,4-alpha-glucan branching enzyme GlgB"/>
    <property type="match status" value="1"/>
</dbReference>
<dbReference type="Gene3D" id="3.20.20.80">
    <property type="entry name" value="Glycosidases"/>
    <property type="match status" value="1"/>
</dbReference>
<dbReference type="Gene3D" id="2.60.40.1180">
    <property type="entry name" value="Golgi alpha-mannosidase II"/>
    <property type="match status" value="1"/>
</dbReference>
<dbReference type="Gene3D" id="2.60.40.10">
    <property type="entry name" value="Immunoglobulins"/>
    <property type="match status" value="2"/>
</dbReference>
<dbReference type="HAMAP" id="MF_00685">
    <property type="entry name" value="GlgB"/>
    <property type="match status" value="1"/>
</dbReference>
<dbReference type="InterPro" id="IPR006048">
    <property type="entry name" value="A-amylase/branching_C"/>
</dbReference>
<dbReference type="InterPro" id="IPR037439">
    <property type="entry name" value="Branching_enzy"/>
</dbReference>
<dbReference type="InterPro" id="IPR006407">
    <property type="entry name" value="GlgB"/>
</dbReference>
<dbReference type="InterPro" id="IPR054169">
    <property type="entry name" value="GlgB_N"/>
</dbReference>
<dbReference type="InterPro" id="IPR044143">
    <property type="entry name" value="GlgB_N_E_set_prok"/>
</dbReference>
<dbReference type="InterPro" id="IPR006047">
    <property type="entry name" value="Glyco_hydro_13_cat_dom"/>
</dbReference>
<dbReference type="InterPro" id="IPR004193">
    <property type="entry name" value="Glyco_hydro_13_N"/>
</dbReference>
<dbReference type="InterPro" id="IPR013780">
    <property type="entry name" value="Glyco_hydro_b"/>
</dbReference>
<dbReference type="InterPro" id="IPR017853">
    <property type="entry name" value="Glycoside_hydrolase_SF"/>
</dbReference>
<dbReference type="InterPro" id="IPR013783">
    <property type="entry name" value="Ig-like_fold"/>
</dbReference>
<dbReference type="InterPro" id="IPR014756">
    <property type="entry name" value="Ig_E-set"/>
</dbReference>
<dbReference type="NCBIfam" id="TIGR01515">
    <property type="entry name" value="branching_enzym"/>
    <property type="match status" value="1"/>
</dbReference>
<dbReference type="NCBIfam" id="NF003811">
    <property type="entry name" value="PRK05402.1"/>
    <property type="match status" value="1"/>
</dbReference>
<dbReference type="NCBIfam" id="NF008967">
    <property type="entry name" value="PRK12313.1"/>
    <property type="match status" value="1"/>
</dbReference>
<dbReference type="PANTHER" id="PTHR43651">
    <property type="entry name" value="1,4-ALPHA-GLUCAN-BRANCHING ENZYME"/>
    <property type="match status" value="1"/>
</dbReference>
<dbReference type="PANTHER" id="PTHR43651:SF3">
    <property type="entry name" value="1,4-ALPHA-GLUCAN-BRANCHING ENZYME"/>
    <property type="match status" value="1"/>
</dbReference>
<dbReference type="Pfam" id="PF00128">
    <property type="entry name" value="Alpha-amylase"/>
    <property type="match status" value="2"/>
</dbReference>
<dbReference type="Pfam" id="PF02806">
    <property type="entry name" value="Alpha-amylase_C"/>
    <property type="match status" value="1"/>
</dbReference>
<dbReference type="Pfam" id="PF02922">
    <property type="entry name" value="CBM_48"/>
    <property type="match status" value="1"/>
</dbReference>
<dbReference type="Pfam" id="PF22019">
    <property type="entry name" value="GlgB_N"/>
    <property type="match status" value="1"/>
</dbReference>
<dbReference type="PIRSF" id="PIRSF000463">
    <property type="entry name" value="GlgB"/>
    <property type="match status" value="1"/>
</dbReference>
<dbReference type="SMART" id="SM00642">
    <property type="entry name" value="Aamy"/>
    <property type="match status" value="1"/>
</dbReference>
<dbReference type="SUPFAM" id="SSF51445">
    <property type="entry name" value="(Trans)glycosidases"/>
    <property type="match status" value="1"/>
</dbReference>
<dbReference type="SUPFAM" id="SSF81296">
    <property type="entry name" value="E set domains"/>
    <property type="match status" value="2"/>
</dbReference>
<dbReference type="SUPFAM" id="SSF51011">
    <property type="entry name" value="Glycosyl hydrolase domain"/>
    <property type="match status" value="1"/>
</dbReference>
<sequence length="731" mass="81729">MSRSEKLTGEHLAPEPAEMARLVAGTHHNPHGILGAHEYDDHTVIRAFRPHAVEVVALVGKDRFSLQHLDSGLFAVALPFVDLIDYRLQVTYEGCEPHTVADAYRFLPTLGEVDLHLFAEGRHERLWEVLGAHPRSFTTADGVVSGVSFAVWAPNAKGVSLIGEFNGWNGHEAPMRVLGPSGVWELFWPDFPCDGLYKFRVHGADGVVTDRADPFAFGTEVPPQTASRVTSSDYTWGDDDWMAGRALRNPVNEAMSTYEVHLGSWRPGLSYRQLARELTDYIVDQGFTHVELLPVAEHPFAGSWGYQVTSYYAPTSRFGTPDDFRALVDALHQAGIGVIVDWVPAHFPKDAWALGRFDGTPLYEHSDPKRGEQLDWGTYVFDFGRPEVRNFLVANALYWLQEFHIDGLRVDAVASMLYLDYSRPEGGWTPNVHGGRENLEAVQFLQEMNATAHKVAPGIVTIAEESTPWSGVTRPTNIGGLGFSMKWNMGWMHDTLDYVSRDPVYRSYHHHEMTFSMLYAFSENYVLPLSHDEVVHGKGTLWGRMPGNNHVKAAGLRSLLAYQWAHPGKQLLFMGQEFGQRAEWSEQRGLDWFQLDENGFSNGIQRLVRDINDIYRCHPALWSLDTTPEGYSWIDANDSANNVLSFMRYGSDGSVLACVFNFAGAEHRDYRLGLPRAGRWREVLNTDATIYHGSGIGNLGGVDATDDPWHGRPASAVLVLPPTSALWLTPA</sequence>
<feature type="chain" id="PRO_0000188718" description="1,4-alpha-glucan branching enzyme GlgB">
    <location>
        <begin position="1"/>
        <end position="731"/>
    </location>
</feature>
<feature type="active site" description="Nucleophile">
    <location>
        <position position="411"/>
    </location>
</feature>
<feature type="active site" description="Proton donor">
    <location>
        <position position="464"/>
    </location>
</feature>
<feature type="disulfide bond" evidence="6 7">
    <location>
        <begin position="193"/>
        <end position="617"/>
    </location>
</feature>
<feature type="helix" evidence="8">
    <location>
        <begin position="16"/>
        <end position="24"/>
    </location>
</feature>
<feature type="helix" evidence="8">
    <location>
        <begin position="30"/>
        <end position="33"/>
    </location>
</feature>
<feature type="strand" evidence="8">
    <location>
        <begin position="34"/>
        <end position="48"/>
    </location>
</feature>
<feature type="strand" evidence="8">
    <location>
        <begin position="57"/>
        <end position="59"/>
    </location>
</feature>
<feature type="strand" evidence="8">
    <location>
        <begin position="72"/>
        <end position="75"/>
    </location>
</feature>
<feature type="strand" evidence="8">
    <location>
        <begin position="87"/>
        <end position="91"/>
    </location>
</feature>
<feature type="strand" evidence="8">
    <location>
        <begin position="98"/>
        <end position="100"/>
    </location>
</feature>
<feature type="helix" evidence="8">
    <location>
        <begin position="103"/>
        <end position="105"/>
    </location>
</feature>
<feature type="helix" evidence="8">
    <location>
        <begin position="112"/>
        <end position="119"/>
    </location>
</feature>
<feature type="helix" evidence="8">
    <location>
        <begin position="126"/>
        <end position="128"/>
    </location>
</feature>
<feature type="strand" evidence="8">
    <location>
        <begin position="130"/>
        <end position="138"/>
    </location>
</feature>
<feature type="strand" evidence="8">
    <location>
        <begin position="140"/>
        <end position="152"/>
    </location>
</feature>
<feature type="strand" evidence="8">
    <location>
        <begin position="157"/>
        <end position="163"/>
    </location>
</feature>
<feature type="helix" evidence="8">
    <location>
        <begin position="164"/>
        <end position="166"/>
    </location>
</feature>
<feature type="helix" evidence="8">
    <location>
        <begin position="179"/>
        <end position="181"/>
    </location>
</feature>
<feature type="strand" evidence="8">
    <location>
        <begin position="183"/>
        <end position="189"/>
    </location>
</feature>
<feature type="strand" evidence="8">
    <location>
        <begin position="196"/>
        <end position="202"/>
    </location>
</feature>
<feature type="strand" evidence="8">
    <location>
        <begin position="208"/>
        <end position="211"/>
    </location>
</feature>
<feature type="strand" evidence="8">
    <location>
        <begin position="217"/>
        <end position="219"/>
    </location>
</feature>
<feature type="helix" evidence="8">
    <location>
        <begin position="239"/>
        <end position="245"/>
    </location>
</feature>
<feature type="helix" evidence="8">
    <location>
        <begin position="250"/>
        <end position="252"/>
    </location>
</feature>
<feature type="strand" evidence="8">
    <location>
        <begin position="256"/>
        <end position="260"/>
    </location>
</feature>
<feature type="turn" evidence="8">
    <location>
        <begin position="262"/>
        <end position="264"/>
    </location>
</feature>
<feature type="helix" evidence="8">
    <location>
        <begin position="271"/>
        <end position="285"/>
    </location>
</feature>
<feature type="strand" evidence="8">
    <location>
        <begin position="288"/>
        <end position="293"/>
    </location>
</feature>
<feature type="helix" evidence="8">
    <location>
        <begin position="301"/>
        <end position="303"/>
    </location>
</feature>
<feature type="strand" evidence="8">
    <location>
        <begin position="309"/>
        <end position="314"/>
    </location>
</feature>
<feature type="helix" evidence="8">
    <location>
        <begin position="316"/>
        <end position="318"/>
    </location>
</feature>
<feature type="helix" evidence="8">
    <location>
        <begin position="321"/>
        <end position="333"/>
    </location>
</feature>
<feature type="strand" evidence="8">
    <location>
        <begin position="337"/>
        <end position="342"/>
    </location>
</feature>
<feature type="turn" evidence="8">
    <location>
        <begin position="351"/>
        <end position="358"/>
    </location>
</feature>
<feature type="strand" evidence="8">
    <location>
        <begin position="370"/>
        <end position="372"/>
    </location>
</feature>
<feature type="helix" evidence="8">
    <location>
        <begin position="386"/>
        <end position="402"/>
    </location>
</feature>
<feature type="strand" evidence="8">
    <location>
        <begin position="407"/>
        <end position="410"/>
    </location>
</feature>
<feature type="helix" evidence="8">
    <location>
        <begin position="414"/>
        <end position="417"/>
    </location>
</feature>
<feature type="helix" evidence="8">
    <location>
        <begin position="439"/>
        <end position="455"/>
    </location>
</feature>
<feature type="strand" evidence="8">
    <location>
        <begin position="460"/>
        <end position="463"/>
    </location>
</feature>
<feature type="helix" evidence="8">
    <location>
        <begin position="476"/>
        <end position="478"/>
    </location>
</feature>
<feature type="strand" evidence="8">
    <location>
        <begin position="484"/>
        <end position="487"/>
    </location>
</feature>
<feature type="helix" evidence="8">
    <location>
        <begin position="489"/>
        <end position="500"/>
    </location>
</feature>
<feature type="helix" evidence="8">
    <location>
        <begin position="503"/>
        <end position="509"/>
    </location>
</feature>
<feature type="helix" evidence="8">
    <location>
        <begin position="510"/>
        <end position="514"/>
    </location>
</feature>
<feature type="helix" evidence="8">
    <location>
        <begin position="515"/>
        <end position="518"/>
    </location>
</feature>
<feature type="turn" evidence="8">
    <location>
        <begin position="519"/>
        <end position="521"/>
    </location>
</feature>
<feature type="strand" evidence="8">
    <location>
        <begin position="525"/>
        <end position="529"/>
    </location>
</feature>
<feature type="helix" evidence="8">
    <location>
        <begin position="531"/>
        <end position="533"/>
    </location>
</feature>
<feature type="helix" evidence="8">
    <location>
        <begin position="541"/>
        <end position="544"/>
    </location>
</feature>
<feature type="helix" evidence="8">
    <location>
        <begin position="549"/>
        <end position="565"/>
    </location>
</feature>
<feature type="strand" evidence="8">
    <location>
        <begin position="566"/>
        <end position="573"/>
    </location>
</feature>
<feature type="helix" evidence="8">
    <location>
        <begin position="576"/>
        <end position="578"/>
    </location>
</feature>
<feature type="turn" evidence="8">
    <location>
        <begin position="586"/>
        <end position="588"/>
    </location>
</feature>
<feature type="helix" evidence="8">
    <location>
        <begin position="592"/>
        <end position="596"/>
    </location>
</feature>
<feature type="strand" evidence="8">
    <location>
        <begin position="597"/>
        <end position="600"/>
    </location>
</feature>
<feature type="helix" evidence="8">
    <location>
        <begin position="601"/>
        <end position="617"/>
    </location>
</feature>
<feature type="helix" evidence="8">
    <location>
        <begin position="619"/>
        <end position="621"/>
    </location>
</feature>
<feature type="turn" evidence="8">
    <location>
        <begin position="622"/>
        <end position="626"/>
    </location>
</feature>
<feature type="helix" evidence="8">
    <location>
        <begin position="628"/>
        <end position="630"/>
    </location>
</feature>
<feature type="strand" evidence="8">
    <location>
        <begin position="631"/>
        <end position="638"/>
    </location>
</feature>
<feature type="turn" evidence="8">
    <location>
        <begin position="639"/>
        <end position="642"/>
    </location>
</feature>
<feature type="strand" evidence="8">
    <location>
        <begin position="643"/>
        <end position="649"/>
    </location>
</feature>
<feature type="strand" evidence="8">
    <location>
        <begin position="655"/>
        <end position="661"/>
    </location>
</feature>
<feature type="strand" evidence="8">
    <location>
        <begin position="663"/>
        <end position="665"/>
    </location>
</feature>
<feature type="strand" evidence="8">
    <location>
        <begin position="667"/>
        <end position="676"/>
    </location>
</feature>
<feature type="strand" evidence="8">
    <location>
        <begin position="678"/>
        <end position="685"/>
    </location>
</feature>
<feature type="helix" evidence="8">
    <location>
        <begin position="689"/>
        <end position="691"/>
    </location>
</feature>
<feature type="strand" evidence="8">
    <location>
        <begin position="701"/>
        <end position="706"/>
    </location>
</feature>
<feature type="strand" evidence="8">
    <location>
        <begin position="712"/>
        <end position="720"/>
    </location>
</feature>
<feature type="strand" evidence="8">
    <location>
        <begin position="724"/>
        <end position="730"/>
    </location>
</feature>
<protein>
    <recommendedName>
        <fullName>1,4-alpha-glucan branching enzyme GlgB</fullName>
        <ecNumber>2.4.1.18</ecNumber>
    </recommendedName>
    <alternativeName>
        <fullName>1,4-alpha-D-glucan:1,4-alpha-D-glucan 6-glucosyl-transferase</fullName>
    </alternativeName>
    <alternativeName>
        <fullName>Alpha-(1-&gt;4)-glucan branching enzyme</fullName>
    </alternativeName>
    <alternativeName>
        <fullName>Glycogen-branching enzyme</fullName>
        <shortName>BE</shortName>
    </alternativeName>
</protein>
<comment type="function">
    <text evidence="1 2">Essential enzyme that catalyzes the formation of the alpha-1,6-glucosidic linkages in glucan chains by scission of a 1,4-alpha-linked oligosaccharide from growing alpha-1,4-glucan chains and the subsequent attachment of the oligosaccharide to the alpha-1,6 position. Is involved in the biosynthesis of both glycogen and capsular alpha-D-glucan.</text>
</comment>
<comment type="catalytic activity">
    <reaction evidence="1 4">
        <text>Transfers a segment of a (1-&gt;4)-alpha-D-glucan chain to a primary hydroxy group in a similar glucan chain.</text>
        <dbReference type="EC" id="2.4.1.18"/>
    </reaction>
</comment>
<comment type="activity regulation">
    <text evidence="1 4">Is inhibited by divalent cations such as Zn(2+) and Cu(2+), but not by Mg(2+), Mn(2+) and Ca(2+). Is not inhibited by several known inhibitors of the GH13 family such as ADP, ADP glucose, tunicamycin, castenospermine, nojirimycin, or acarbose.</text>
</comment>
<comment type="biophysicochemical properties">
    <phDependence>
        <text evidence="1">Optimum pH is 7.0.</text>
    </phDependence>
    <temperatureDependence>
        <text evidence="1">Optimum temperature is 30 degrees Celsius. Loses 20% of its maximum activity at 37 degrees Celsius and is nearly inactive above 55 degrees Celsius.</text>
    </temperatureDependence>
</comment>
<comment type="pathway">
    <text evidence="2">Glycan biosynthesis; glycogen biosynthesis.</text>
</comment>
<comment type="pathway">
    <text evidence="2">Capsule biogenesis; capsule polysaccharide biosynthesis.</text>
</comment>
<comment type="subunit">
    <text evidence="1 3">Monomer. Interacts with WhiB1 via an intermolecular disulfide bond.</text>
</comment>
<comment type="disruption phenotype">
    <text evidence="2">Disruption of glgB is lethal for the bacteria in vitro. Affects the production of both extracellular alpha-D-glucan and intracellular glycogen.</text>
</comment>
<comment type="miscellaneous">
    <text>Cysteine residues of GlgB form structural disulfide bond(s), which allow the protein to exist in two different redox-dependent conformational states. Although the conformational change do not affect the branching enzyme activity, the change in surface hydrophobicity could influence the interaction or dissociation of different cellular proteins with GlgB in response to different physiological states.</text>
</comment>
<comment type="similarity">
    <text evidence="5">Belongs to the glycosyl hydrolase 13 family. GlgB subfamily.</text>
</comment>
<keyword id="KW-0002">3D-structure</keyword>
<keyword id="KW-0972">Capsule biogenesis/degradation</keyword>
<keyword id="KW-0119">Carbohydrate metabolism</keyword>
<keyword id="KW-1015">Disulfide bond</keyword>
<keyword id="KW-0320">Glycogen biosynthesis</keyword>
<keyword id="KW-0321">Glycogen metabolism</keyword>
<keyword id="KW-0328">Glycosyltransferase</keyword>
<keyword id="KW-1185">Reference proteome</keyword>
<keyword id="KW-0808">Transferase</keyword>
<accession>P9WN45</accession>
<accession>L0T925</accession>
<accession>Q10625</accession>